<keyword id="KW-0963">Cytoplasm</keyword>
<keyword id="KW-0378">Hydrolase</keyword>
<keyword id="KW-0520">NAD</keyword>
<keyword id="KW-0554">One-carbon metabolism</keyword>
<organism>
    <name type="scientific">Corynebacterium glutamicum (strain R)</name>
    <dbReference type="NCBI Taxonomy" id="340322"/>
    <lineage>
        <taxon>Bacteria</taxon>
        <taxon>Bacillati</taxon>
        <taxon>Actinomycetota</taxon>
        <taxon>Actinomycetes</taxon>
        <taxon>Mycobacteriales</taxon>
        <taxon>Corynebacteriaceae</taxon>
        <taxon>Corynebacterium</taxon>
    </lineage>
</organism>
<name>SAHH_CORGB</name>
<reference key="1">
    <citation type="journal article" date="2007" name="Microbiology">
        <title>Comparative analysis of the Corynebacterium glutamicum group and complete genome sequence of strain R.</title>
        <authorList>
            <person name="Yukawa H."/>
            <person name="Omumasaba C.A."/>
            <person name="Nonaka H."/>
            <person name="Kos P."/>
            <person name="Okai N."/>
            <person name="Suzuki N."/>
            <person name="Suda M."/>
            <person name="Tsuge Y."/>
            <person name="Watanabe J."/>
            <person name="Ikeda Y."/>
            <person name="Vertes A.A."/>
            <person name="Inui M."/>
        </authorList>
    </citation>
    <scope>NUCLEOTIDE SEQUENCE [LARGE SCALE GENOMIC DNA]</scope>
    <source>
        <strain>R</strain>
    </source>
</reference>
<proteinExistence type="inferred from homology"/>
<dbReference type="EC" id="3.13.2.1" evidence="1"/>
<dbReference type="EMBL" id="AP009044">
    <property type="protein sequence ID" value="BAF53834.1"/>
    <property type="molecule type" value="Genomic_DNA"/>
</dbReference>
<dbReference type="RefSeq" id="WP_003858195.1">
    <property type="nucleotide sequence ID" value="NC_009342.1"/>
</dbReference>
<dbReference type="SMR" id="A4QC87"/>
<dbReference type="GeneID" id="1018748"/>
<dbReference type="KEGG" id="cgt:cgR_0861"/>
<dbReference type="HOGENOM" id="CLU_025194_2_1_11"/>
<dbReference type="PhylomeDB" id="A4QC87"/>
<dbReference type="UniPathway" id="UPA00314">
    <property type="reaction ID" value="UER00076"/>
</dbReference>
<dbReference type="Proteomes" id="UP000006698">
    <property type="component" value="Chromosome"/>
</dbReference>
<dbReference type="GO" id="GO:0005829">
    <property type="term" value="C:cytosol"/>
    <property type="evidence" value="ECO:0007669"/>
    <property type="project" value="TreeGrafter"/>
</dbReference>
<dbReference type="GO" id="GO:0004013">
    <property type="term" value="F:adenosylhomocysteinase activity"/>
    <property type="evidence" value="ECO:0007669"/>
    <property type="project" value="UniProtKB-UniRule"/>
</dbReference>
<dbReference type="GO" id="GO:0071269">
    <property type="term" value="P:L-homocysteine biosynthetic process"/>
    <property type="evidence" value="ECO:0007669"/>
    <property type="project" value="UniProtKB-UniRule"/>
</dbReference>
<dbReference type="GO" id="GO:0006730">
    <property type="term" value="P:one-carbon metabolic process"/>
    <property type="evidence" value="ECO:0007669"/>
    <property type="project" value="UniProtKB-KW"/>
</dbReference>
<dbReference type="GO" id="GO:0033353">
    <property type="term" value="P:S-adenosylmethionine cycle"/>
    <property type="evidence" value="ECO:0007669"/>
    <property type="project" value="TreeGrafter"/>
</dbReference>
<dbReference type="CDD" id="cd00401">
    <property type="entry name" value="SAHH"/>
    <property type="match status" value="1"/>
</dbReference>
<dbReference type="FunFam" id="3.40.50.720:FF:000004">
    <property type="entry name" value="Adenosylhomocysteinase"/>
    <property type="match status" value="1"/>
</dbReference>
<dbReference type="Gene3D" id="3.40.50.1480">
    <property type="entry name" value="Adenosylhomocysteinase-like"/>
    <property type="match status" value="1"/>
</dbReference>
<dbReference type="Gene3D" id="3.40.50.720">
    <property type="entry name" value="NAD(P)-binding Rossmann-like Domain"/>
    <property type="match status" value="1"/>
</dbReference>
<dbReference type="HAMAP" id="MF_00563">
    <property type="entry name" value="AdoHcyase"/>
    <property type="match status" value="1"/>
</dbReference>
<dbReference type="InterPro" id="IPR042172">
    <property type="entry name" value="Adenosylhomocyst_ase-like_sf"/>
</dbReference>
<dbReference type="InterPro" id="IPR000043">
    <property type="entry name" value="Adenosylhomocysteinase-like"/>
</dbReference>
<dbReference type="InterPro" id="IPR015878">
    <property type="entry name" value="Ado_hCys_hydrolase_NAD-bd"/>
</dbReference>
<dbReference type="InterPro" id="IPR036291">
    <property type="entry name" value="NAD(P)-bd_dom_sf"/>
</dbReference>
<dbReference type="InterPro" id="IPR020082">
    <property type="entry name" value="S-Ado-L-homoCys_hydrolase_CS"/>
</dbReference>
<dbReference type="NCBIfam" id="TIGR00936">
    <property type="entry name" value="ahcY"/>
    <property type="match status" value="1"/>
</dbReference>
<dbReference type="NCBIfam" id="NF004005">
    <property type="entry name" value="PRK05476.2-3"/>
    <property type="match status" value="1"/>
</dbReference>
<dbReference type="PANTHER" id="PTHR23420">
    <property type="entry name" value="ADENOSYLHOMOCYSTEINASE"/>
    <property type="match status" value="1"/>
</dbReference>
<dbReference type="PANTHER" id="PTHR23420:SF0">
    <property type="entry name" value="ADENOSYLHOMOCYSTEINASE"/>
    <property type="match status" value="1"/>
</dbReference>
<dbReference type="Pfam" id="PF05221">
    <property type="entry name" value="AdoHcyase"/>
    <property type="match status" value="1"/>
</dbReference>
<dbReference type="Pfam" id="PF00670">
    <property type="entry name" value="AdoHcyase_NAD"/>
    <property type="match status" value="1"/>
</dbReference>
<dbReference type="PIRSF" id="PIRSF001109">
    <property type="entry name" value="Ad_hcy_hydrolase"/>
    <property type="match status" value="1"/>
</dbReference>
<dbReference type="SMART" id="SM00996">
    <property type="entry name" value="AdoHcyase"/>
    <property type="match status" value="1"/>
</dbReference>
<dbReference type="SMART" id="SM00997">
    <property type="entry name" value="AdoHcyase_NAD"/>
    <property type="match status" value="1"/>
</dbReference>
<dbReference type="SUPFAM" id="SSF52283">
    <property type="entry name" value="Formate/glycerate dehydrogenase catalytic domain-like"/>
    <property type="match status" value="1"/>
</dbReference>
<dbReference type="SUPFAM" id="SSF51735">
    <property type="entry name" value="NAD(P)-binding Rossmann-fold domains"/>
    <property type="match status" value="1"/>
</dbReference>
<dbReference type="PROSITE" id="PS00738">
    <property type="entry name" value="ADOHCYASE_1"/>
    <property type="match status" value="1"/>
</dbReference>
<dbReference type="PROSITE" id="PS00739">
    <property type="entry name" value="ADOHCYASE_2"/>
    <property type="match status" value="1"/>
</dbReference>
<accession>A4QC87</accession>
<protein>
    <recommendedName>
        <fullName evidence="1">Adenosylhomocysteinase</fullName>
        <ecNumber evidence="1">3.13.2.1</ecNumber>
    </recommendedName>
    <alternativeName>
        <fullName evidence="1">S-adenosyl-L-homocysteine hydrolase</fullName>
        <shortName evidence="1">AdoHcyase</shortName>
    </alternativeName>
</protein>
<feature type="chain" id="PRO_1000061124" description="Adenosylhomocysteinase">
    <location>
        <begin position="1"/>
        <end position="478"/>
    </location>
</feature>
<feature type="binding site" evidence="1">
    <location>
        <position position="57"/>
    </location>
    <ligand>
        <name>substrate</name>
    </ligand>
</feature>
<feature type="binding site" evidence="1">
    <location>
        <position position="139"/>
    </location>
    <ligand>
        <name>substrate</name>
    </ligand>
</feature>
<feature type="binding site" evidence="1">
    <location>
        <position position="201"/>
    </location>
    <ligand>
        <name>substrate</name>
    </ligand>
</feature>
<feature type="binding site" evidence="1">
    <location>
        <begin position="202"/>
        <end position="204"/>
    </location>
    <ligand>
        <name>NAD(+)</name>
        <dbReference type="ChEBI" id="CHEBI:57540"/>
    </ligand>
</feature>
<feature type="binding site" evidence="1">
    <location>
        <position position="231"/>
    </location>
    <ligand>
        <name>substrate</name>
    </ligand>
</feature>
<feature type="binding site" evidence="1">
    <location>
        <position position="235"/>
    </location>
    <ligand>
        <name>substrate</name>
    </ligand>
</feature>
<feature type="binding site" evidence="1">
    <location>
        <position position="236"/>
    </location>
    <ligand>
        <name>NAD(+)</name>
        <dbReference type="ChEBI" id="CHEBI:57540"/>
    </ligand>
</feature>
<feature type="binding site" evidence="1">
    <location>
        <begin position="265"/>
        <end position="270"/>
    </location>
    <ligand>
        <name>NAD(+)</name>
        <dbReference type="ChEBI" id="CHEBI:57540"/>
    </ligand>
</feature>
<feature type="binding site" evidence="1">
    <location>
        <position position="288"/>
    </location>
    <ligand>
        <name>NAD(+)</name>
        <dbReference type="ChEBI" id="CHEBI:57540"/>
    </ligand>
</feature>
<feature type="binding site" evidence="1">
    <location>
        <position position="323"/>
    </location>
    <ligand>
        <name>NAD(+)</name>
        <dbReference type="ChEBI" id="CHEBI:57540"/>
    </ligand>
</feature>
<feature type="binding site" evidence="1">
    <location>
        <begin position="344"/>
        <end position="346"/>
    </location>
    <ligand>
        <name>NAD(+)</name>
        <dbReference type="ChEBI" id="CHEBI:57540"/>
    </ligand>
</feature>
<feature type="binding site" evidence="1">
    <location>
        <position position="392"/>
    </location>
    <ligand>
        <name>NAD(+)</name>
        <dbReference type="ChEBI" id="CHEBI:57540"/>
    </ligand>
</feature>
<gene>
    <name evidence="1" type="primary">ahcY</name>
    <name type="ordered locus">cgR_0861</name>
</gene>
<evidence type="ECO:0000255" key="1">
    <source>
        <dbReference type="HAMAP-Rule" id="MF_00563"/>
    </source>
</evidence>
<comment type="function">
    <text evidence="1">May play a key role in the regulation of the intracellular concentration of adenosylhomocysteine.</text>
</comment>
<comment type="catalytic activity">
    <reaction evidence="1">
        <text>S-adenosyl-L-homocysteine + H2O = L-homocysteine + adenosine</text>
        <dbReference type="Rhea" id="RHEA:21708"/>
        <dbReference type="ChEBI" id="CHEBI:15377"/>
        <dbReference type="ChEBI" id="CHEBI:16335"/>
        <dbReference type="ChEBI" id="CHEBI:57856"/>
        <dbReference type="ChEBI" id="CHEBI:58199"/>
        <dbReference type="EC" id="3.13.2.1"/>
    </reaction>
</comment>
<comment type="cofactor">
    <cofactor evidence="1">
        <name>NAD(+)</name>
        <dbReference type="ChEBI" id="CHEBI:57540"/>
    </cofactor>
    <text evidence="1">Binds 1 NAD(+) per subunit.</text>
</comment>
<comment type="pathway">
    <text evidence="1">Amino-acid biosynthesis; L-homocysteine biosynthesis; L-homocysteine from S-adenosyl-L-homocysteine: step 1/1.</text>
</comment>
<comment type="subcellular location">
    <subcellularLocation>
        <location evidence="1">Cytoplasm</location>
    </subcellularLocation>
</comment>
<comment type="similarity">
    <text evidence="1">Belongs to the adenosylhomocysteinase family.</text>
</comment>
<sequence length="478" mass="52425">MAQVMDFKVADLSLAEAGRHQIRLAEYEMPGLMQLRKEFADEQPLKGARIAGSIHMTVQTAVLIETLTALGAEVRWASCNIFSTQDEAAAAIVVGSGTVEEPAGVPVFAWKGESLEEYWWCINQIFSWGDELPNMILDDGGDATMAVIRGREYEQAGLVPPAEANDSDEYIAFLGMLREVLAAEPGKWGKIAEAVKGVTEETTTGVHRLYHFAEEGVLPFPAMNVNDAVTKSKFDNKYGTRHSLIDGINRATDMLMGGKNVLVCGYGDVGKGCAEAFDGQGARVKVTEADPINALQALMDGYSVVTVDEAIEDADIVITATGNKDIISFEQMLKMKDHALLGNIGHFDNEIDMHSLLHRDDVTRTTIKPQVDEFTFSTGRSIIVLSEGRLLNLGNATGHPSFVMSNSFADQTIAQIELFQNEGQYENEVYRLPKVLDEKVARIHVEALGGQLTELTKEQAEYIGVDVAGPFKPEHYRY</sequence>